<comment type="catalytic activity">
    <reaction>
        <text>L-citrulline + L-aspartate + ATP = 2-(N(omega)-L-arginino)succinate + AMP + diphosphate + H(+)</text>
        <dbReference type="Rhea" id="RHEA:10932"/>
        <dbReference type="ChEBI" id="CHEBI:15378"/>
        <dbReference type="ChEBI" id="CHEBI:29991"/>
        <dbReference type="ChEBI" id="CHEBI:30616"/>
        <dbReference type="ChEBI" id="CHEBI:33019"/>
        <dbReference type="ChEBI" id="CHEBI:57472"/>
        <dbReference type="ChEBI" id="CHEBI:57743"/>
        <dbReference type="ChEBI" id="CHEBI:456215"/>
        <dbReference type="EC" id="6.3.4.5"/>
    </reaction>
</comment>
<comment type="pathway">
    <text>Amino-acid biosynthesis; L-arginine biosynthesis; L-arginine from L-ornithine and carbamoyl phosphate: step 2/3.</text>
</comment>
<comment type="subunit">
    <text evidence="1">Homotetramer.</text>
</comment>
<comment type="subcellular location">
    <subcellularLocation>
        <location evidence="1">Cytoplasm</location>
    </subcellularLocation>
</comment>
<comment type="similarity">
    <text evidence="2">Belongs to the argininosuccinate synthase family. Type 2 subfamily.</text>
</comment>
<accession>Q9JXC1</accession>
<keyword id="KW-0028">Amino-acid biosynthesis</keyword>
<keyword id="KW-0055">Arginine biosynthesis</keyword>
<keyword id="KW-0067">ATP-binding</keyword>
<keyword id="KW-0963">Cytoplasm</keyword>
<keyword id="KW-0436">Ligase</keyword>
<keyword id="KW-0547">Nucleotide-binding</keyword>
<keyword id="KW-1185">Reference proteome</keyword>
<protein>
    <recommendedName>
        <fullName>Argininosuccinate synthase</fullName>
        <ecNumber>6.3.4.5</ecNumber>
    </recommendedName>
    <alternativeName>
        <fullName>Citrulline--aspartate ligase</fullName>
    </alternativeName>
</protein>
<reference key="1">
    <citation type="journal article" date="2000" name="Science">
        <title>Complete genome sequence of Neisseria meningitidis serogroup B strain MC58.</title>
        <authorList>
            <person name="Tettelin H."/>
            <person name="Saunders N.J."/>
            <person name="Heidelberg J.F."/>
            <person name="Jeffries A.C."/>
            <person name="Nelson K.E."/>
            <person name="Eisen J.A."/>
            <person name="Ketchum K.A."/>
            <person name="Hood D.W."/>
            <person name="Peden J.F."/>
            <person name="Dodson R.J."/>
            <person name="Nelson W.C."/>
            <person name="Gwinn M.L."/>
            <person name="DeBoy R.T."/>
            <person name="Peterson J.D."/>
            <person name="Hickey E.K."/>
            <person name="Haft D.H."/>
            <person name="Salzberg S.L."/>
            <person name="White O."/>
            <person name="Fleischmann R.D."/>
            <person name="Dougherty B.A."/>
            <person name="Mason T.M."/>
            <person name="Ciecko A."/>
            <person name="Parksey D.S."/>
            <person name="Blair E."/>
            <person name="Cittone H."/>
            <person name="Clark E.B."/>
            <person name="Cotton M.D."/>
            <person name="Utterback T.R."/>
            <person name="Khouri H.M."/>
            <person name="Qin H."/>
            <person name="Vamathevan J.J."/>
            <person name="Gill J."/>
            <person name="Scarlato V."/>
            <person name="Masignani V."/>
            <person name="Pizza M."/>
            <person name="Grandi G."/>
            <person name="Sun L."/>
            <person name="Smith H.O."/>
            <person name="Fraser C.M."/>
            <person name="Moxon E.R."/>
            <person name="Rappuoli R."/>
            <person name="Venter J.C."/>
        </authorList>
    </citation>
    <scope>NUCLEOTIDE SEQUENCE [LARGE SCALE GENOMIC DNA]</scope>
    <source>
        <strain>ATCC BAA-335 / MC58</strain>
    </source>
</reference>
<proteinExistence type="inferred from homology"/>
<gene>
    <name type="primary">argG</name>
    <name type="ordered locus">NMB2129</name>
</gene>
<dbReference type="EC" id="6.3.4.5"/>
<dbReference type="EMBL" id="AE002098">
    <property type="protein sequence ID" value="AAF42437.1"/>
    <property type="molecule type" value="Genomic_DNA"/>
</dbReference>
<dbReference type="PIR" id="B81003">
    <property type="entry name" value="B81003"/>
</dbReference>
<dbReference type="RefSeq" id="NP_275114.1">
    <property type="nucleotide sequence ID" value="NC_003112.2"/>
</dbReference>
<dbReference type="RefSeq" id="WP_002223213.1">
    <property type="nucleotide sequence ID" value="NC_003112.2"/>
</dbReference>
<dbReference type="SMR" id="Q9JXC1"/>
<dbReference type="FunCoup" id="Q9JXC1">
    <property type="interactions" value="453"/>
</dbReference>
<dbReference type="STRING" id="122586.NMB2129"/>
<dbReference type="PaxDb" id="122586-NMB2129"/>
<dbReference type="KEGG" id="nme:NMB2129"/>
<dbReference type="PATRIC" id="fig|122586.8.peg.2713"/>
<dbReference type="HOGENOM" id="CLU_032784_4_1_4"/>
<dbReference type="InParanoid" id="Q9JXC1"/>
<dbReference type="OrthoDB" id="9801641at2"/>
<dbReference type="UniPathway" id="UPA00068">
    <property type="reaction ID" value="UER00113"/>
</dbReference>
<dbReference type="Proteomes" id="UP000000425">
    <property type="component" value="Chromosome"/>
</dbReference>
<dbReference type="GO" id="GO:0005737">
    <property type="term" value="C:cytoplasm"/>
    <property type="evidence" value="ECO:0000318"/>
    <property type="project" value="GO_Central"/>
</dbReference>
<dbReference type="GO" id="GO:0004055">
    <property type="term" value="F:argininosuccinate synthase activity"/>
    <property type="evidence" value="ECO:0000318"/>
    <property type="project" value="GO_Central"/>
</dbReference>
<dbReference type="GO" id="GO:0005524">
    <property type="term" value="F:ATP binding"/>
    <property type="evidence" value="ECO:0007669"/>
    <property type="project" value="UniProtKB-UniRule"/>
</dbReference>
<dbReference type="GO" id="GO:0042803">
    <property type="term" value="F:protein homodimerization activity"/>
    <property type="evidence" value="ECO:0007669"/>
    <property type="project" value="InterPro"/>
</dbReference>
<dbReference type="GO" id="GO:0000053">
    <property type="term" value="P:argininosuccinate metabolic process"/>
    <property type="evidence" value="ECO:0000318"/>
    <property type="project" value="GO_Central"/>
</dbReference>
<dbReference type="GO" id="GO:0006526">
    <property type="term" value="P:L-arginine biosynthetic process"/>
    <property type="evidence" value="ECO:0000318"/>
    <property type="project" value="GO_Central"/>
</dbReference>
<dbReference type="GO" id="GO:0000050">
    <property type="term" value="P:urea cycle"/>
    <property type="evidence" value="ECO:0000318"/>
    <property type="project" value="GO_Central"/>
</dbReference>
<dbReference type="CDD" id="cd01999">
    <property type="entry name" value="ASS"/>
    <property type="match status" value="1"/>
</dbReference>
<dbReference type="FunFam" id="1.10.287.400:FF:000001">
    <property type="entry name" value="Argininosuccinate synthase"/>
    <property type="match status" value="1"/>
</dbReference>
<dbReference type="Gene3D" id="1.10.287.400">
    <property type="match status" value="1"/>
</dbReference>
<dbReference type="Gene3D" id="3.90.1260.10">
    <property type="entry name" value="Argininosuccinate synthetase, chain A, domain 2"/>
    <property type="match status" value="1"/>
</dbReference>
<dbReference type="Gene3D" id="3.40.50.620">
    <property type="entry name" value="HUPs"/>
    <property type="match status" value="1"/>
</dbReference>
<dbReference type="HAMAP" id="MF_00581">
    <property type="entry name" value="Arg_succ_synth_type2"/>
    <property type="match status" value="1"/>
</dbReference>
<dbReference type="InterPro" id="IPR023437">
    <property type="entry name" value="Arg_succ_synth_type2_subfam"/>
</dbReference>
<dbReference type="InterPro" id="IPR048268">
    <property type="entry name" value="Arginosuc_syn_C"/>
</dbReference>
<dbReference type="InterPro" id="IPR048267">
    <property type="entry name" value="Arginosuc_syn_N"/>
</dbReference>
<dbReference type="InterPro" id="IPR001518">
    <property type="entry name" value="Arginosuc_synth"/>
</dbReference>
<dbReference type="InterPro" id="IPR018223">
    <property type="entry name" value="Arginosuc_synth_CS"/>
</dbReference>
<dbReference type="InterPro" id="IPR023434">
    <property type="entry name" value="Arginosuc_synth_type_1_subfam"/>
</dbReference>
<dbReference type="InterPro" id="IPR024074">
    <property type="entry name" value="AS_cat/multimer_dom_body"/>
</dbReference>
<dbReference type="InterPro" id="IPR024073">
    <property type="entry name" value="AS_multimer_C_tail"/>
</dbReference>
<dbReference type="InterPro" id="IPR014729">
    <property type="entry name" value="Rossmann-like_a/b/a_fold"/>
</dbReference>
<dbReference type="NCBIfam" id="TIGR00032">
    <property type="entry name" value="argG"/>
    <property type="match status" value="1"/>
</dbReference>
<dbReference type="NCBIfam" id="NF003779">
    <property type="entry name" value="PRK05370.1"/>
    <property type="match status" value="1"/>
</dbReference>
<dbReference type="PANTHER" id="PTHR11587">
    <property type="entry name" value="ARGININOSUCCINATE SYNTHASE"/>
    <property type="match status" value="1"/>
</dbReference>
<dbReference type="PANTHER" id="PTHR11587:SF2">
    <property type="entry name" value="ARGININOSUCCINATE SYNTHASE"/>
    <property type="match status" value="1"/>
</dbReference>
<dbReference type="Pfam" id="PF20979">
    <property type="entry name" value="Arginosuc_syn_C"/>
    <property type="match status" value="1"/>
</dbReference>
<dbReference type="Pfam" id="PF00764">
    <property type="entry name" value="Arginosuc_synth"/>
    <property type="match status" value="1"/>
</dbReference>
<dbReference type="SUPFAM" id="SSF52402">
    <property type="entry name" value="Adenine nucleotide alpha hydrolases-like"/>
    <property type="match status" value="1"/>
</dbReference>
<dbReference type="SUPFAM" id="SSF69864">
    <property type="entry name" value="Argininosuccinate synthetase, C-terminal domain"/>
    <property type="match status" value="1"/>
</dbReference>
<dbReference type="PROSITE" id="PS00564">
    <property type="entry name" value="ARGININOSUCCIN_SYN_1"/>
    <property type="match status" value="1"/>
</dbReference>
<dbReference type="PROSITE" id="PS00565">
    <property type="entry name" value="ARGININOSUCCIN_SYN_2"/>
    <property type="match status" value="1"/>
</dbReference>
<sequence>MSQNHTILQSLPVGQKVGIAFSGGLDTSAALLWMKLKGALPYAYTANLGQPDEDDYNAIPKKAMEYGAENARLIDCRAQLAHEGIAAIQCGAFHVSTGGIAYFNTTPLGRAVTGTMLVSAMKEDDVNIWGDGSTYKGNDIERFYRYGLLTNPALKIYKPWLDQQFIDELGGRHEMSEFLIANGFNYKMSVEKAYSTDSNMLGATHEAKDLEFLNSGIKIVKPIMGVAFWDENVEVSPEEVSVRFEEGVPVALNGKEYADPVELFLEANRIGGRHGLGMSDQIENRIIEAKSRGIYEAPGMALFHIAYERLVTGIHNEDTIEQYRINGLRLGRLLYQGRWFDSQALMLRETAQRWVAKAVTGEVTLELRRGNDYSILNTESPNLTYQPERLSMEKVEDAAFTPLDRIGQLTMRNLDITDTRVKLGIYSQSGLLSLGEGSVLPQLGNKQ</sequence>
<organism>
    <name type="scientific">Neisseria meningitidis serogroup B (strain ATCC BAA-335 / MC58)</name>
    <dbReference type="NCBI Taxonomy" id="122586"/>
    <lineage>
        <taxon>Bacteria</taxon>
        <taxon>Pseudomonadati</taxon>
        <taxon>Pseudomonadota</taxon>
        <taxon>Betaproteobacteria</taxon>
        <taxon>Neisseriales</taxon>
        <taxon>Neisseriaceae</taxon>
        <taxon>Neisseria</taxon>
    </lineage>
</organism>
<evidence type="ECO:0000250" key="1"/>
<evidence type="ECO:0000305" key="2"/>
<feature type="chain" id="PRO_0000148702" description="Argininosuccinate synthase">
    <location>
        <begin position="1"/>
        <end position="447"/>
    </location>
</feature>
<feature type="binding site" evidence="1">
    <location>
        <begin position="20"/>
        <end position="28"/>
    </location>
    <ligand>
        <name>ATP</name>
        <dbReference type="ChEBI" id="CHEBI:30616"/>
    </ligand>
</feature>
<feature type="binding site" evidence="1">
    <location>
        <position position="46"/>
    </location>
    <ligand>
        <name>ATP</name>
        <dbReference type="ChEBI" id="CHEBI:30616"/>
    </ligand>
</feature>
<feature type="binding site" evidence="1">
    <location>
        <position position="102"/>
    </location>
    <ligand>
        <name>L-citrulline</name>
        <dbReference type="ChEBI" id="CHEBI:57743"/>
    </ligand>
</feature>
<feature type="binding site" evidence="1">
    <location>
        <position position="132"/>
    </location>
    <ligand>
        <name>ATP</name>
        <dbReference type="ChEBI" id="CHEBI:30616"/>
    </ligand>
</feature>
<feature type="binding site" evidence="1">
    <location>
        <position position="134"/>
    </location>
    <ligand>
        <name>ATP</name>
        <dbReference type="ChEBI" id="CHEBI:30616"/>
    </ligand>
</feature>
<feature type="binding site" evidence="1">
    <location>
        <position position="134"/>
    </location>
    <ligand>
        <name>L-aspartate</name>
        <dbReference type="ChEBI" id="CHEBI:29991"/>
    </ligand>
</feature>
<feature type="binding site" evidence="1">
    <location>
        <position position="138"/>
    </location>
    <ligand>
        <name>L-aspartate</name>
        <dbReference type="ChEBI" id="CHEBI:29991"/>
    </ligand>
</feature>
<feature type="binding site" evidence="1">
    <location>
        <position position="138"/>
    </location>
    <ligand>
        <name>L-citrulline</name>
        <dbReference type="ChEBI" id="CHEBI:57743"/>
    </ligand>
</feature>
<feature type="binding site" evidence="1">
    <location>
        <position position="139"/>
    </location>
    <ligand>
        <name>ATP</name>
        <dbReference type="ChEBI" id="CHEBI:30616"/>
    </ligand>
</feature>
<feature type="binding site" evidence="1">
    <location>
        <position position="139"/>
    </location>
    <ligand>
        <name>L-aspartate</name>
        <dbReference type="ChEBI" id="CHEBI:29991"/>
    </ligand>
</feature>
<feature type="binding site" evidence="1">
    <location>
        <position position="142"/>
    </location>
    <ligand>
        <name>L-citrulline</name>
        <dbReference type="ChEBI" id="CHEBI:57743"/>
    </ligand>
</feature>
<feature type="binding site" evidence="1">
    <location>
        <position position="195"/>
    </location>
    <ligand>
        <name>L-citrulline</name>
        <dbReference type="ChEBI" id="CHEBI:57743"/>
    </ligand>
</feature>
<feature type="binding site" evidence="1">
    <location>
        <position position="197"/>
    </location>
    <ligand>
        <name>ATP</name>
        <dbReference type="ChEBI" id="CHEBI:30616"/>
    </ligand>
</feature>
<feature type="binding site" evidence="1">
    <location>
        <position position="204"/>
    </location>
    <ligand>
        <name>L-citrulline</name>
        <dbReference type="ChEBI" id="CHEBI:57743"/>
    </ligand>
</feature>
<feature type="binding site" evidence="1">
    <location>
        <position position="206"/>
    </location>
    <ligand>
        <name>L-citrulline</name>
        <dbReference type="ChEBI" id="CHEBI:57743"/>
    </ligand>
</feature>
<feature type="binding site" evidence="1">
    <location>
        <position position="283"/>
    </location>
    <ligand>
        <name>L-citrulline</name>
        <dbReference type="ChEBI" id="CHEBI:57743"/>
    </ligand>
</feature>
<name>ASSY_NEIMB</name>